<proteinExistence type="inferred from homology"/>
<comment type="function">
    <text evidence="1">Catalyzes oxygen-dependent 5-hydroxyuridine (ho5U) modification at position 34 in tRNAs.</text>
</comment>
<comment type="catalytic activity">
    <reaction evidence="1">
        <text>uridine(34) in tRNA + AH2 + O2 = 5-hydroxyuridine(34) in tRNA + A + H2O</text>
        <dbReference type="Rhea" id="RHEA:64224"/>
        <dbReference type="Rhea" id="RHEA-COMP:11727"/>
        <dbReference type="Rhea" id="RHEA-COMP:13381"/>
        <dbReference type="ChEBI" id="CHEBI:13193"/>
        <dbReference type="ChEBI" id="CHEBI:15377"/>
        <dbReference type="ChEBI" id="CHEBI:15379"/>
        <dbReference type="ChEBI" id="CHEBI:17499"/>
        <dbReference type="ChEBI" id="CHEBI:65315"/>
        <dbReference type="ChEBI" id="CHEBI:136877"/>
    </reaction>
</comment>
<comment type="similarity">
    <text evidence="1">Belongs to the TrhO family.</text>
</comment>
<name>TRHO_HAMD5</name>
<protein>
    <recommendedName>
        <fullName evidence="1">tRNA uridine(34) hydroxylase</fullName>
        <ecNumber evidence="1">1.14.-.-</ecNumber>
    </recommendedName>
    <alternativeName>
        <fullName evidence="1">tRNA hydroxylation protein O</fullName>
    </alternativeName>
</protein>
<accession>C4K8L9</accession>
<feature type="chain" id="PRO_1000206336" description="tRNA uridine(34) hydroxylase">
    <location>
        <begin position="1"/>
        <end position="355"/>
    </location>
</feature>
<feature type="domain" description="Rhodanese" evidence="1">
    <location>
        <begin position="146"/>
        <end position="240"/>
    </location>
</feature>
<feature type="active site" description="Cysteine persulfide intermediate" evidence="1">
    <location>
        <position position="200"/>
    </location>
</feature>
<sequence>MPVLHNRISNQKLKEKMLAETQERQTLSFYKYFALDNPSMFRDKLYTQWNQLSVFGRVYIAKEGINAQISVPIDHYNDFKASLFNAHPALDQIRLNTALEDNGRSFWVLRMKVRQRIVADGIEDETFNPAHTGQYLKAHEVNEMIKDPDALFVDMRNHYEYEVGHFKNAIKVPSDTFREQLPMAVDMLKEDKEKKMVLYCTGGIRCEKASAYLLHHGFKNVYHVEGGIIEYVRTAKKKDLPLHFIGKNFVFDERMGERVSEEVIAHCHQCEQFCDTHVNCHNSACHLLFIQCAICSEKFSGCCSAICQEELELSPEEQRLRRSARGNKIKIFNKSKDVLETIMNKSIIDQGNKEG</sequence>
<keyword id="KW-0560">Oxidoreductase</keyword>
<keyword id="KW-0819">tRNA processing</keyword>
<gene>
    <name evidence="1" type="primary">trhO</name>
    <name type="ordered locus">HDEF_0081</name>
</gene>
<organism>
    <name type="scientific">Hamiltonella defensa subsp. Acyrthosiphon pisum (strain 5AT)</name>
    <dbReference type="NCBI Taxonomy" id="572265"/>
    <lineage>
        <taxon>Bacteria</taxon>
        <taxon>Pseudomonadati</taxon>
        <taxon>Pseudomonadota</taxon>
        <taxon>Gammaproteobacteria</taxon>
        <taxon>Enterobacterales</taxon>
        <taxon>Enterobacteriaceae</taxon>
        <taxon>aphid secondary symbionts</taxon>
        <taxon>Candidatus Hamiltonella</taxon>
    </lineage>
</organism>
<evidence type="ECO:0000255" key="1">
    <source>
        <dbReference type="HAMAP-Rule" id="MF_00469"/>
    </source>
</evidence>
<dbReference type="EC" id="1.14.-.-" evidence="1"/>
<dbReference type="EMBL" id="CP001277">
    <property type="protein sequence ID" value="ACQ66856.1"/>
    <property type="molecule type" value="Genomic_DNA"/>
</dbReference>
<dbReference type="RefSeq" id="WP_012737821.1">
    <property type="nucleotide sequence ID" value="NC_012751.1"/>
</dbReference>
<dbReference type="SMR" id="C4K8L9"/>
<dbReference type="STRING" id="572265.HDEF_0081"/>
<dbReference type="GeneID" id="66260022"/>
<dbReference type="KEGG" id="hde:HDEF_0081"/>
<dbReference type="eggNOG" id="COG1054">
    <property type="taxonomic scope" value="Bacteria"/>
</dbReference>
<dbReference type="HOGENOM" id="CLU_038878_1_1_6"/>
<dbReference type="Proteomes" id="UP000002334">
    <property type="component" value="Chromosome"/>
</dbReference>
<dbReference type="GO" id="GO:0016705">
    <property type="term" value="F:oxidoreductase activity, acting on paired donors, with incorporation or reduction of molecular oxygen"/>
    <property type="evidence" value="ECO:0007669"/>
    <property type="project" value="UniProtKB-UniRule"/>
</dbReference>
<dbReference type="GO" id="GO:0006400">
    <property type="term" value="P:tRNA modification"/>
    <property type="evidence" value="ECO:0007669"/>
    <property type="project" value="UniProtKB-UniRule"/>
</dbReference>
<dbReference type="CDD" id="cd01518">
    <property type="entry name" value="RHOD_YceA"/>
    <property type="match status" value="1"/>
</dbReference>
<dbReference type="Gene3D" id="3.30.70.100">
    <property type="match status" value="1"/>
</dbReference>
<dbReference type="Gene3D" id="3.40.250.10">
    <property type="entry name" value="Rhodanese-like domain"/>
    <property type="match status" value="1"/>
</dbReference>
<dbReference type="HAMAP" id="MF_00469">
    <property type="entry name" value="TrhO"/>
    <property type="match status" value="1"/>
</dbReference>
<dbReference type="InterPro" id="IPR001763">
    <property type="entry name" value="Rhodanese-like_dom"/>
</dbReference>
<dbReference type="InterPro" id="IPR036873">
    <property type="entry name" value="Rhodanese-like_dom_sf"/>
</dbReference>
<dbReference type="InterPro" id="IPR022111">
    <property type="entry name" value="Rhodanese_C"/>
</dbReference>
<dbReference type="InterPro" id="IPR020936">
    <property type="entry name" value="TrhO"/>
</dbReference>
<dbReference type="InterPro" id="IPR040503">
    <property type="entry name" value="TRHO_N"/>
</dbReference>
<dbReference type="NCBIfam" id="NF001133">
    <property type="entry name" value="PRK00142.1-1"/>
    <property type="match status" value="1"/>
</dbReference>
<dbReference type="PANTHER" id="PTHR43846:SF1">
    <property type="entry name" value="TRNA URIDINE(34) HYDROXYLASE"/>
    <property type="match status" value="1"/>
</dbReference>
<dbReference type="PANTHER" id="PTHR43846">
    <property type="entry name" value="UPF0176 PROTEIN YCEA"/>
    <property type="match status" value="1"/>
</dbReference>
<dbReference type="Pfam" id="PF00581">
    <property type="entry name" value="Rhodanese"/>
    <property type="match status" value="1"/>
</dbReference>
<dbReference type="Pfam" id="PF12368">
    <property type="entry name" value="Rhodanese_C"/>
    <property type="match status" value="1"/>
</dbReference>
<dbReference type="Pfam" id="PF17773">
    <property type="entry name" value="UPF0176_N"/>
    <property type="match status" value="1"/>
</dbReference>
<dbReference type="SMART" id="SM00450">
    <property type="entry name" value="RHOD"/>
    <property type="match status" value="1"/>
</dbReference>
<dbReference type="SUPFAM" id="SSF52821">
    <property type="entry name" value="Rhodanese/Cell cycle control phosphatase"/>
    <property type="match status" value="1"/>
</dbReference>
<dbReference type="PROSITE" id="PS50206">
    <property type="entry name" value="RHODANESE_3"/>
    <property type="match status" value="1"/>
</dbReference>
<reference key="1">
    <citation type="journal article" date="2009" name="Proc. Natl. Acad. Sci. U.S.A.">
        <title>Hamiltonella defensa, genome evolution of protective bacterial endosymbiont from pathogenic ancestors.</title>
        <authorList>
            <person name="Degnan P.H."/>
            <person name="Yu Y."/>
            <person name="Sisneros N."/>
            <person name="Wing R.A."/>
            <person name="Moran N.A."/>
        </authorList>
    </citation>
    <scope>NUCLEOTIDE SEQUENCE [LARGE SCALE GENOMIC DNA]</scope>
    <source>
        <strain>5AT</strain>
    </source>
</reference>